<proteinExistence type="inferred from homology"/>
<dbReference type="EC" id="4.1.1.49" evidence="1"/>
<dbReference type="EMBL" id="CP001396">
    <property type="protein sequence ID" value="ACR64036.1"/>
    <property type="molecule type" value="Genomic_DNA"/>
</dbReference>
<dbReference type="RefSeq" id="WP_001265681.1">
    <property type="nucleotide sequence ID" value="NC_012759.1"/>
</dbReference>
<dbReference type="SMR" id="C4ZUQ8"/>
<dbReference type="KEGG" id="ebw:BWG_3094"/>
<dbReference type="HOGENOM" id="CLU_018247_0_1_6"/>
<dbReference type="UniPathway" id="UPA00138"/>
<dbReference type="GO" id="GO:0005829">
    <property type="term" value="C:cytosol"/>
    <property type="evidence" value="ECO:0007669"/>
    <property type="project" value="TreeGrafter"/>
</dbReference>
<dbReference type="GO" id="GO:0005524">
    <property type="term" value="F:ATP binding"/>
    <property type="evidence" value="ECO:0007669"/>
    <property type="project" value="UniProtKB-UniRule"/>
</dbReference>
<dbReference type="GO" id="GO:0046872">
    <property type="term" value="F:metal ion binding"/>
    <property type="evidence" value="ECO:0007669"/>
    <property type="project" value="UniProtKB-KW"/>
</dbReference>
<dbReference type="GO" id="GO:0004612">
    <property type="term" value="F:phosphoenolpyruvate carboxykinase (ATP) activity"/>
    <property type="evidence" value="ECO:0007669"/>
    <property type="project" value="UniProtKB-UniRule"/>
</dbReference>
<dbReference type="GO" id="GO:0006094">
    <property type="term" value="P:gluconeogenesis"/>
    <property type="evidence" value="ECO:0007669"/>
    <property type="project" value="UniProtKB-UniRule"/>
</dbReference>
<dbReference type="CDD" id="cd00484">
    <property type="entry name" value="PEPCK_ATP"/>
    <property type="match status" value="1"/>
</dbReference>
<dbReference type="FunFam" id="2.170.8.10:FF:000001">
    <property type="entry name" value="Phosphoenolpyruvate carboxykinase (ATP)"/>
    <property type="match status" value="1"/>
</dbReference>
<dbReference type="FunFam" id="3.40.449.10:FF:000001">
    <property type="entry name" value="Phosphoenolpyruvate carboxykinase (ATP)"/>
    <property type="match status" value="1"/>
</dbReference>
<dbReference type="Gene3D" id="3.90.228.20">
    <property type="match status" value="1"/>
</dbReference>
<dbReference type="Gene3D" id="3.40.449.10">
    <property type="entry name" value="Phosphoenolpyruvate Carboxykinase, domain 1"/>
    <property type="match status" value="1"/>
</dbReference>
<dbReference type="Gene3D" id="2.170.8.10">
    <property type="entry name" value="Phosphoenolpyruvate Carboxykinase, domain 2"/>
    <property type="match status" value="1"/>
</dbReference>
<dbReference type="HAMAP" id="MF_00453">
    <property type="entry name" value="PEPCK_ATP"/>
    <property type="match status" value="1"/>
</dbReference>
<dbReference type="InterPro" id="IPR001272">
    <property type="entry name" value="PEP_carboxykinase_ATP"/>
</dbReference>
<dbReference type="InterPro" id="IPR013035">
    <property type="entry name" value="PEP_carboxykinase_C"/>
</dbReference>
<dbReference type="InterPro" id="IPR008210">
    <property type="entry name" value="PEP_carboxykinase_N"/>
</dbReference>
<dbReference type="InterPro" id="IPR015994">
    <property type="entry name" value="PEPCK_ATP_CS"/>
</dbReference>
<dbReference type="NCBIfam" id="TIGR00224">
    <property type="entry name" value="pckA"/>
    <property type="match status" value="1"/>
</dbReference>
<dbReference type="NCBIfam" id="NF006819">
    <property type="entry name" value="PRK09344.1-1"/>
    <property type="match status" value="1"/>
</dbReference>
<dbReference type="NCBIfam" id="NF006820">
    <property type="entry name" value="PRK09344.1-2"/>
    <property type="match status" value="1"/>
</dbReference>
<dbReference type="NCBIfam" id="NF006821">
    <property type="entry name" value="PRK09344.1-3"/>
    <property type="match status" value="1"/>
</dbReference>
<dbReference type="PANTHER" id="PTHR30031:SF0">
    <property type="entry name" value="PHOSPHOENOLPYRUVATE CARBOXYKINASE (ATP)"/>
    <property type="match status" value="1"/>
</dbReference>
<dbReference type="PANTHER" id="PTHR30031">
    <property type="entry name" value="PHOSPHOENOLPYRUVATE CARBOXYKINASE ATP"/>
    <property type="match status" value="1"/>
</dbReference>
<dbReference type="Pfam" id="PF01293">
    <property type="entry name" value="PEPCK_ATP"/>
    <property type="match status" value="1"/>
</dbReference>
<dbReference type="PIRSF" id="PIRSF006294">
    <property type="entry name" value="PEP_crbxkin"/>
    <property type="match status" value="1"/>
</dbReference>
<dbReference type="SUPFAM" id="SSF68923">
    <property type="entry name" value="PEP carboxykinase N-terminal domain"/>
    <property type="match status" value="1"/>
</dbReference>
<dbReference type="SUPFAM" id="SSF53795">
    <property type="entry name" value="PEP carboxykinase-like"/>
    <property type="match status" value="1"/>
</dbReference>
<dbReference type="PROSITE" id="PS00532">
    <property type="entry name" value="PEPCK_ATP"/>
    <property type="match status" value="1"/>
</dbReference>
<feature type="chain" id="PRO_1000206235" description="Phosphoenolpyruvate carboxykinase (ATP)">
    <location>
        <begin position="1"/>
        <end position="540"/>
    </location>
</feature>
<feature type="binding site" evidence="1">
    <location>
        <position position="65"/>
    </location>
    <ligand>
        <name>substrate</name>
    </ligand>
</feature>
<feature type="binding site" evidence="1">
    <location>
        <position position="207"/>
    </location>
    <ligand>
        <name>substrate</name>
    </ligand>
</feature>
<feature type="binding site" evidence="1">
    <location>
        <position position="213"/>
    </location>
    <ligand>
        <name>ATP</name>
        <dbReference type="ChEBI" id="CHEBI:30616"/>
    </ligand>
</feature>
<feature type="binding site" evidence="1">
    <location>
        <position position="213"/>
    </location>
    <ligand>
        <name>Mn(2+)</name>
        <dbReference type="ChEBI" id="CHEBI:29035"/>
    </ligand>
</feature>
<feature type="binding site" evidence="1">
    <location>
        <position position="213"/>
    </location>
    <ligand>
        <name>substrate</name>
    </ligand>
</feature>
<feature type="binding site" evidence="1">
    <location>
        <position position="232"/>
    </location>
    <ligand>
        <name>ATP</name>
        <dbReference type="ChEBI" id="CHEBI:30616"/>
    </ligand>
</feature>
<feature type="binding site" evidence="1">
    <location>
        <position position="232"/>
    </location>
    <ligand>
        <name>Mn(2+)</name>
        <dbReference type="ChEBI" id="CHEBI:29035"/>
    </ligand>
</feature>
<feature type="binding site" evidence="1">
    <location>
        <begin position="248"/>
        <end position="256"/>
    </location>
    <ligand>
        <name>ATP</name>
        <dbReference type="ChEBI" id="CHEBI:30616"/>
    </ligand>
</feature>
<feature type="binding site" evidence="1">
    <location>
        <position position="269"/>
    </location>
    <ligand>
        <name>Mn(2+)</name>
        <dbReference type="ChEBI" id="CHEBI:29035"/>
    </ligand>
</feature>
<feature type="binding site" evidence="1">
    <location>
        <position position="297"/>
    </location>
    <ligand>
        <name>ATP</name>
        <dbReference type="ChEBI" id="CHEBI:30616"/>
    </ligand>
</feature>
<feature type="binding site" evidence="1">
    <location>
        <position position="333"/>
    </location>
    <ligand>
        <name>ATP</name>
        <dbReference type="ChEBI" id="CHEBI:30616"/>
    </ligand>
</feature>
<feature type="binding site" evidence="1">
    <location>
        <position position="333"/>
    </location>
    <ligand>
        <name>substrate</name>
    </ligand>
</feature>
<feature type="binding site" evidence="1">
    <location>
        <begin position="449"/>
        <end position="450"/>
    </location>
    <ligand>
        <name>ATP</name>
        <dbReference type="ChEBI" id="CHEBI:30616"/>
    </ligand>
</feature>
<feature type="binding site" evidence="1">
    <location>
        <position position="455"/>
    </location>
    <ligand>
        <name>ATP</name>
        <dbReference type="ChEBI" id="CHEBI:30616"/>
    </ligand>
</feature>
<feature type="modified residue" description="N6-acetyllysine" evidence="1">
    <location>
        <position position="87"/>
    </location>
</feature>
<feature type="modified residue" description="N6-acetyllysine" evidence="1">
    <location>
        <position position="523"/>
    </location>
</feature>
<protein>
    <recommendedName>
        <fullName evidence="1">Phosphoenolpyruvate carboxykinase (ATP)</fullName>
        <shortName evidence="1">PCK</shortName>
        <shortName evidence="1">PEP carboxykinase</shortName>
        <shortName evidence="1">PEPCK</shortName>
        <ecNumber evidence="1">4.1.1.49</ecNumber>
    </recommendedName>
</protein>
<accession>C4ZUQ8</accession>
<name>PCKA_ECOBW</name>
<comment type="function">
    <text evidence="1">Involved in the gluconeogenesis. Catalyzes the conversion of oxaloacetate (OAA) to phosphoenolpyruvate (PEP) through direct phosphoryl transfer between the nucleoside triphosphate and OAA.</text>
</comment>
<comment type="catalytic activity">
    <reaction evidence="1">
        <text>oxaloacetate + ATP = phosphoenolpyruvate + ADP + CO2</text>
        <dbReference type="Rhea" id="RHEA:18617"/>
        <dbReference type="ChEBI" id="CHEBI:16452"/>
        <dbReference type="ChEBI" id="CHEBI:16526"/>
        <dbReference type="ChEBI" id="CHEBI:30616"/>
        <dbReference type="ChEBI" id="CHEBI:58702"/>
        <dbReference type="ChEBI" id="CHEBI:456216"/>
        <dbReference type="EC" id="4.1.1.49"/>
    </reaction>
</comment>
<comment type="cofactor">
    <cofactor evidence="1">
        <name>Mn(2+)</name>
        <dbReference type="ChEBI" id="CHEBI:29035"/>
    </cofactor>
    <text evidence="1">Binds 1 Mn(2+) ion per subunit.</text>
</comment>
<comment type="pathway">
    <text evidence="1">Carbohydrate biosynthesis; gluconeogenesis.</text>
</comment>
<comment type="subunit">
    <text evidence="1">Monomer.</text>
</comment>
<comment type="subcellular location">
    <subcellularLocation>
        <location evidence="1">Cytoplasm</location>
    </subcellularLocation>
</comment>
<comment type="similarity">
    <text evidence="1">Belongs to the phosphoenolpyruvate carboxykinase (ATP) family.</text>
</comment>
<sequence length="540" mass="59643">MRVNNGLTPQELEAYGISDVHDIVYNPSYDLLYQEELDPSLTGYERGVLTNLGAVAVDTGIFTGRSPKDKYIVRDDTTRDTFWWADKGKGKNDNKPLSPETWQHLKGLVTRQLSGKRLFVVDAFCGANPDTRLSVRFITEVAWQAHFVKNMFIRPSDEELAGFKPDFIVMNGAKCTNPQWKEQGLNSENFVAFNLTERMQLIGGTWYGGEMKKGMFSMMNYLLPLKGIASMHCSANVGEKGDVAVFFGLSGTGKTTLSTDPKRRLIGDDEHGWDDDGVFNFEGGCYAKTIKLSKEAEPEIYNAIRRDALLENVTVREDGTIDFDDGSKTENTRVSYPIYHIDNIVKPVSKAGHATKVIFLTADAFGVLPPVSRLTADQTQYHFLSGFTAKLAGTERGITEPTPTFSACFGAAFLSLHPTQYAEVLVKRMQAAGAQAYLVNTGWNGTGKRISIKDTRAIIDAILNGSLDNAETFTLPMFNLAIPTELPGVDTKILDPRNTYASPEQWQEKAETLAKLFIDNFDKYTDTPAGAALVAAGPKL</sequence>
<evidence type="ECO:0000255" key="1">
    <source>
        <dbReference type="HAMAP-Rule" id="MF_00453"/>
    </source>
</evidence>
<gene>
    <name evidence="1" type="primary">pckA</name>
    <name type="ordered locus">BWG_3094</name>
</gene>
<reference key="1">
    <citation type="journal article" date="2009" name="J. Bacteriol.">
        <title>Genomic sequencing reveals regulatory mutations and recombinational events in the widely used MC4100 lineage of Escherichia coli K-12.</title>
        <authorList>
            <person name="Ferenci T."/>
            <person name="Zhou Z."/>
            <person name="Betteridge T."/>
            <person name="Ren Y."/>
            <person name="Liu Y."/>
            <person name="Feng L."/>
            <person name="Reeves P.R."/>
            <person name="Wang L."/>
        </authorList>
    </citation>
    <scope>NUCLEOTIDE SEQUENCE [LARGE SCALE GENOMIC DNA]</scope>
    <source>
        <strain>K12 / MC4100 / BW2952</strain>
    </source>
</reference>
<organism>
    <name type="scientific">Escherichia coli (strain K12 / MC4100 / BW2952)</name>
    <dbReference type="NCBI Taxonomy" id="595496"/>
    <lineage>
        <taxon>Bacteria</taxon>
        <taxon>Pseudomonadati</taxon>
        <taxon>Pseudomonadota</taxon>
        <taxon>Gammaproteobacteria</taxon>
        <taxon>Enterobacterales</taxon>
        <taxon>Enterobacteriaceae</taxon>
        <taxon>Escherichia</taxon>
    </lineage>
</organism>
<keyword id="KW-0007">Acetylation</keyword>
<keyword id="KW-0067">ATP-binding</keyword>
<keyword id="KW-0963">Cytoplasm</keyword>
<keyword id="KW-0210">Decarboxylase</keyword>
<keyword id="KW-0312">Gluconeogenesis</keyword>
<keyword id="KW-0456">Lyase</keyword>
<keyword id="KW-0464">Manganese</keyword>
<keyword id="KW-0479">Metal-binding</keyword>
<keyword id="KW-0547">Nucleotide-binding</keyword>